<feature type="chain" id="PRO_1000215233" description="ATP synthase subunit delta">
    <location>
        <begin position="1"/>
        <end position="183"/>
    </location>
</feature>
<dbReference type="EMBL" id="AP010904">
    <property type="protein sequence ID" value="BAH73969.1"/>
    <property type="molecule type" value="Genomic_DNA"/>
</dbReference>
<dbReference type="RefSeq" id="WP_012750051.1">
    <property type="nucleotide sequence ID" value="NC_012796.1"/>
</dbReference>
<dbReference type="SMR" id="C4XI07"/>
<dbReference type="STRING" id="573370.DMR_04780"/>
<dbReference type="KEGG" id="dma:DMR_04780"/>
<dbReference type="eggNOG" id="COG0712">
    <property type="taxonomic scope" value="Bacteria"/>
</dbReference>
<dbReference type="HOGENOM" id="CLU_085114_1_1_7"/>
<dbReference type="OrthoDB" id="9802471at2"/>
<dbReference type="Proteomes" id="UP000009071">
    <property type="component" value="Chromosome"/>
</dbReference>
<dbReference type="GO" id="GO:0005886">
    <property type="term" value="C:plasma membrane"/>
    <property type="evidence" value="ECO:0007669"/>
    <property type="project" value="UniProtKB-SubCell"/>
</dbReference>
<dbReference type="GO" id="GO:0045259">
    <property type="term" value="C:proton-transporting ATP synthase complex"/>
    <property type="evidence" value="ECO:0007669"/>
    <property type="project" value="UniProtKB-KW"/>
</dbReference>
<dbReference type="GO" id="GO:0046933">
    <property type="term" value="F:proton-transporting ATP synthase activity, rotational mechanism"/>
    <property type="evidence" value="ECO:0007669"/>
    <property type="project" value="UniProtKB-UniRule"/>
</dbReference>
<dbReference type="Gene3D" id="1.10.520.20">
    <property type="entry name" value="N-terminal domain of the delta subunit of the F1F0-ATP synthase"/>
    <property type="match status" value="1"/>
</dbReference>
<dbReference type="HAMAP" id="MF_01416">
    <property type="entry name" value="ATP_synth_delta_bact"/>
    <property type="match status" value="1"/>
</dbReference>
<dbReference type="InterPro" id="IPR026015">
    <property type="entry name" value="ATP_synth_OSCP/delta_N_sf"/>
</dbReference>
<dbReference type="InterPro" id="IPR020781">
    <property type="entry name" value="ATPase_OSCP/d_CS"/>
</dbReference>
<dbReference type="InterPro" id="IPR000711">
    <property type="entry name" value="ATPase_OSCP/dsu"/>
</dbReference>
<dbReference type="NCBIfam" id="TIGR01145">
    <property type="entry name" value="ATP_synt_delta"/>
    <property type="match status" value="1"/>
</dbReference>
<dbReference type="NCBIfam" id="NF004402">
    <property type="entry name" value="PRK05758.2-2"/>
    <property type="match status" value="1"/>
</dbReference>
<dbReference type="PANTHER" id="PTHR11910">
    <property type="entry name" value="ATP SYNTHASE DELTA CHAIN"/>
    <property type="match status" value="1"/>
</dbReference>
<dbReference type="Pfam" id="PF00213">
    <property type="entry name" value="OSCP"/>
    <property type="match status" value="1"/>
</dbReference>
<dbReference type="PRINTS" id="PR00125">
    <property type="entry name" value="ATPASEDELTA"/>
</dbReference>
<dbReference type="SUPFAM" id="SSF47928">
    <property type="entry name" value="N-terminal domain of the delta subunit of the F1F0-ATP synthase"/>
    <property type="match status" value="1"/>
</dbReference>
<dbReference type="PROSITE" id="PS00389">
    <property type="entry name" value="ATPASE_DELTA"/>
    <property type="match status" value="1"/>
</dbReference>
<name>ATPD_SOLM1</name>
<comment type="function">
    <text evidence="1">F(1)F(0) ATP synthase produces ATP from ADP in the presence of a proton or sodium gradient. F-type ATPases consist of two structural domains, F(1) containing the extramembraneous catalytic core and F(0) containing the membrane proton channel, linked together by a central stalk and a peripheral stalk. During catalysis, ATP synthesis in the catalytic domain of F(1) is coupled via a rotary mechanism of the central stalk subunits to proton translocation.</text>
</comment>
<comment type="function">
    <text evidence="1">This protein is part of the stalk that links CF(0) to CF(1). It either transmits conformational changes from CF(0) to CF(1) or is implicated in proton conduction.</text>
</comment>
<comment type="subunit">
    <text evidence="1">F-type ATPases have 2 components, F(1) - the catalytic core - and F(0) - the membrane proton channel. F(1) has five subunits: alpha(3), beta(3), gamma(1), delta(1), epsilon(1). F(0) has three main subunits: a(1), b(2) and c(10-14). The alpha and beta chains form an alternating ring which encloses part of the gamma chain. F(1) is attached to F(0) by a central stalk formed by the gamma and epsilon chains, while a peripheral stalk is formed by the delta and b chains.</text>
</comment>
<comment type="subcellular location">
    <subcellularLocation>
        <location evidence="1">Cell inner membrane</location>
        <topology evidence="1">Peripheral membrane protein</topology>
    </subcellularLocation>
</comment>
<comment type="similarity">
    <text evidence="1">Belongs to the ATPase delta chain family.</text>
</comment>
<keyword id="KW-0066">ATP synthesis</keyword>
<keyword id="KW-0997">Cell inner membrane</keyword>
<keyword id="KW-1003">Cell membrane</keyword>
<keyword id="KW-0139">CF(1)</keyword>
<keyword id="KW-0375">Hydrogen ion transport</keyword>
<keyword id="KW-0406">Ion transport</keyword>
<keyword id="KW-0472">Membrane</keyword>
<keyword id="KW-0813">Transport</keyword>
<proteinExistence type="inferred from homology"/>
<sequence length="183" mass="19632">MTGNIVARRYAKALFALAKKAGKKAPAEYGKDLEAFASVLEGSPDLLKVFANPIISADVKKSVLSGVAGKIGLKPMVINFLSLLADKDRLPCVLEVSALYRTLLDEAEGVMRGQLVTAFALADARQDQIKVKLEKQSGKKLVLSFAVDPSIIGGVVLKVGDKVLDASLRAQLEILKEQIKRGE</sequence>
<gene>
    <name evidence="1" type="primary">atpH</name>
    <name type="ordered locus">DMR_04780</name>
</gene>
<organism>
    <name type="scientific">Solidesulfovibrio magneticus (strain ATCC 700980 / DSM 13731 / RS-1)</name>
    <name type="common">Desulfovibrio magneticus</name>
    <dbReference type="NCBI Taxonomy" id="573370"/>
    <lineage>
        <taxon>Bacteria</taxon>
        <taxon>Pseudomonadati</taxon>
        <taxon>Thermodesulfobacteriota</taxon>
        <taxon>Desulfovibrionia</taxon>
        <taxon>Desulfovibrionales</taxon>
        <taxon>Desulfovibrionaceae</taxon>
        <taxon>Solidesulfovibrio</taxon>
    </lineage>
</organism>
<accession>C4XI07</accession>
<protein>
    <recommendedName>
        <fullName evidence="1">ATP synthase subunit delta</fullName>
    </recommendedName>
    <alternativeName>
        <fullName evidence="1">ATP synthase F(1) sector subunit delta</fullName>
    </alternativeName>
    <alternativeName>
        <fullName evidence="1">F-type ATPase subunit delta</fullName>
        <shortName evidence="1">F-ATPase subunit delta</shortName>
    </alternativeName>
</protein>
<reference key="1">
    <citation type="journal article" date="2009" name="Genome Res.">
        <title>Whole genome sequence of Desulfovibrio magneticus strain RS-1 revealed common gene clusters in magnetotactic bacteria.</title>
        <authorList>
            <person name="Nakazawa H."/>
            <person name="Arakaki A."/>
            <person name="Narita-Yamada S."/>
            <person name="Yashiro I."/>
            <person name="Jinno K."/>
            <person name="Aoki N."/>
            <person name="Tsuruyama A."/>
            <person name="Okamura Y."/>
            <person name="Tanikawa S."/>
            <person name="Fujita N."/>
            <person name="Takeyama H."/>
            <person name="Matsunaga T."/>
        </authorList>
    </citation>
    <scope>NUCLEOTIDE SEQUENCE [LARGE SCALE GENOMIC DNA]</scope>
    <source>
        <strain>ATCC 700980 / DSM 13731 / RS-1</strain>
    </source>
</reference>
<evidence type="ECO:0000255" key="1">
    <source>
        <dbReference type="HAMAP-Rule" id="MF_01416"/>
    </source>
</evidence>